<accession>Q2KBR2</accession>
<keyword id="KW-0414">Isoprene biosynthesis</keyword>
<keyword id="KW-0460">Magnesium</keyword>
<keyword id="KW-0479">Metal-binding</keyword>
<keyword id="KW-1185">Reference proteome</keyword>
<keyword id="KW-0784">Thiamine biosynthesis</keyword>
<keyword id="KW-0786">Thiamine pyrophosphate</keyword>
<keyword id="KW-0808">Transferase</keyword>
<feature type="chain" id="PRO_0000256467" description="1-deoxy-D-xylulose-5-phosphate synthase">
    <location>
        <begin position="1"/>
        <end position="638"/>
    </location>
</feature>
<feature type="binding site" evidence="1">
    <location>
        <position position="79"/>
    </location>
    <ligand>
        <name>thiamine diphosphate</name>
        <dbReference type="ChEBI" id="CHEBI:58937"/>
    </ligand>
</feature>
<feature type="binding site" evidence="1">
    <location>
        <begin position="120"/>
        <end position="122"/>
    </location>
    <ligand>
        <name>thiamine diphosphate</name>
        <dbReference type="ChEBI" id="CHEBI:58937"/>
    </ligand>
</feature>
<feature type="binding site" evidence="1">
    <location>
        <position position="151"/>
    </location>
    <ligand>
        <name>Mg(2+)</name>
        <dbReference type="ChEBI" id="CHEBI:18420"/>
    </ligand>
</feature>
<feature type="binding site" evidence="1">
    <location>
        <begin position="152"/>
        <end position="153"/>
    </location>
    <ligand>
        <name>thiamine diphosphate</name>
        <dbReference type="ChEBI" id="CHEBI:58937"/>
    </ligand>
</feature>
<feature type="binding site" evidence="1">
    <location>
        <position position="180"/>
    </location>
    <ligand>
        <name>Mg(2+)</name>
        <dbReference type="ChEBI" id="CHEBI:18420"/>
    </ligand>
</feature>
<feature type="binding site" evidence="1">
    <location>
        <position position="180"/>
    </location>
    <ligand>
        <name>thiamine diphosphate</name>
        <dbReference type="ChEBI" id="CHEBI:58937"/>
    </ligand>
</feature>
<feature type="binding site" evidence="1">
    <location>
        <position position="289"/>
    </location>
    <ligand>
        <name>thiamine diphosphate</name>
        <dbReference type="ChEBI" id="CHEBI:58937"/>
    </ligand>
</feature>
<feature type="binding site" evidence="1">
    <location>
        <position position="371"/>
    </location>
    <ligand>
        <name>thiamine diphosphate</name>
        <dbReference type="ChEBI" id="CHEBI:58937"/>
    </ligand>
</feature>
<protein>
    <recommendedName>
        <fullName evidence="1">1-deoxy-D-xylulose-5-phosphate synthase</fullName>
        <ecNumber evidence="1">2.2.1.7</ecNumber>
    </recommendedName>
    <alternativeName>
        <fullName evidence="1">1-deoxyxylulose-5-phosphate synthase</fullName>
        <shortName evidence="1">DXP synthase</shortName>
        <shortName evidence="1">DXPS</shortName>
    </alternativeName>
</protein>
<comment type="function">
    <text evidence="1">Catalyzes the acyloin condensation reaction between C atoms 2 and 3 of pyruvate and glyceraldehyde 3-phosphate to yield 1-deoxy-D-xylulose-5-phosphate (DXP).</text>
</comment>
<comment type="catalytic activity">
    <reaction evidence="1">
        <text>D-glyceraldehyde 3-phosphate + pyruvate + H(+) = 1-deoxy-D-xylulose 5-phosphate + CO2</text>
        <dbReference type="Rhea" id="RHEA:12605"/>
        <dbReference type="ChEBI" id="CHEBI:15361"/>
        <dbReference type="ChEBI" id="CHEBI:15378"/>
        <dbReference type="ChEBI" id="CHEBI:16526"/>
        <dbReference type="ChEBI" id="CHEBI:57792"/>
        <dbReference type="ChEBI" id="CHEBI:59776"/>
        <dbReference type="EC" id="2.2.1.7"/>
    </reaction>
</comment>
<comment type="cofactor">
    <cofactor evidence="1">
        <name>Mg(2+)</name>
        <dbReference type="ChEBI" id="CHEBI:18420"/>
    </cofactor>
    <text evidence="1">Binds 1 Mg(2+) ion per subunit.</text>
</comment>
<comment type="cofactor">
    <cofactor evidence="1">
        <name>thiamine diphosphate</name>
        <dbReference type="ChEBI" id="CHEBI:58937"/>
    </cofactor>
    <text evidence="1">Binds 1 thiamine pyrophosphate per subunit.</text>
</comment>
<comment type="pathway">
    <text evidence="1">Metabolic intermediate biosynthesis; 1-deoxy-D-xylulose 5-phosphate biosynthesis; 1-deoxy-D-xylulose 5-phosphate from D-glyceraldehyde 3-phosphate and pyruvate: step 1/1.</text>
</comment>
<comment type="subunit">
    <text evidence="1">Homodimer.</text>
</comment>
<comment type="similarity">
    <text evidence="1">Belongs to the transketolase family. DXPS subfamily.</text>
</comment>
<reference key="1">
    <citation type="journal article" date="2006" name="Proc. Natl. Acad. Sci. U.S.A.">
        <title>The partitioned Rhizobium etli genome: genetic and metabolic redundancy in seven interacting replicons.</title>
        <authorList>
            <person name="Gonzalez V."/>
            <person name="Santamaria R.I."/>
            <person name="Bustos P."/>
            <person name="Hernandez-Gonzalez I."/>
            <person name="Medrano-Soto A."/>
            <person name="Moreno-Hagelsieb G."/>
            <person name="Janga S.C."/>
            <person name="Ramirez M.A."/>
            <person name="Jimenez-Jacinto V."/>
            <person name="Collado-Vides J."/>
            <person name="Davila G."/>
        </authorList>
    </citation>
    <scope>NUCLEOTIDE SEQUENCE [LARGE SCALE GENOMIC DNA]</scope>
    <source>
        <strain>ATCC 51251 / DSM 11541 / JCM 21823 / NBRC 15573 / CFN 42</strain>
    </source>
</reference>
<organism>
    <name type="scientific">Rhizobium etli (strain ATCC 51251 / DSM 11541 / JCM 21823 / NBRC 15573 / CFN 42)</name>
    <dbReference type="NCBI Taxonomy" id="347834"/>
    <lineage>
        <taxon>Bacteria</taxon>
        <taxon>Pseudomonadati</taxon>
        <taxon>Pseudomonadota</taxon>
        <taxon>Alphaproteobacteria</taxon>
        <taxon>Hyphomicrobiales</taxon>
        <taxon>Rhizobiaceae</taxon>
        <taxon>Rhizobium/Agrobacterium group</taxon>
        <taxon>Rhizobium</taxon>
    </lineage>
</organism>
<proteinExistence type="inferred from homology"/>
<name>DXS_RHIEC</name>
<dbReference type="EC" id="2.2.1.7" evidence="1"/>
<dbReference type="EMBL" id="CP000133">
    <property type="protein sequence ID" value="ABC89724.1"/>
    <property type="molecule type" value="Genomic_DNA"/>
</dbReference>
<dbReference type="RefSeq" id="WP_011424260.1">
    <property type="nucleotide sequence ID" value="NC_007761.1"/>
</dbReference>
<dbReference type="SMR" id="Q2KBR2"/>
<dbReference type="KEGG" id="ret:RHE_CH00913"/>
<dbReference type="eggNOG" id="COG1154">
    <property type="taxonomic scope" value="Bacteria"/>
</dbReference>
<dbReference type="HOGENOM" id="CLU_009227_1_4_5"/>
<dbReference type="OrthoDB" id="9803371at2"/>
<dbReference type="UniPathway" id="UPA00064">
    <property type="reaction ID" value="UER00091"/>
</dbReference>
<dbReference type="Proteomes" id="UP000001936">
    <property type="component" value="Chromosome"/>
</dbReference>
<dbReference type="GO" id="GO:0008661">
    <property type="term" value="F:1-deoxy-D-xylulose-5-phosphate synthase activity"/>
    <property type="evidence" value="ECO:0007669"/>
    <property type="project" value="UniProtKB-UniRule"/>
</dbReference>
<dbReference type="GO" id="GO:0000287">
    <property type="term" value="F:magnesium ion binding"/>
    <property type="evidence" value="ECO:0007669"/>
    <property type="project" value="UniProtKB-UniRule"/>
</dbReference>
<dbReference type="GO" id="GO:0030976">
    <property type="term" value="F:thiamine pyrophosphate binding"/>
    <property type="evidence" value="ECO:0007669"/>
    <property type="project" value="UniProtKB-UniRule"/>
</dbReference>
<dbReference type="GO" id="GO:0052865">
    <property type="term" value="P:1-deoxy-D-xylulose 5-phosphate biosynthetic process"/>
    <property type="evidence" value="ECO:0007669"/>
    <property type="project" value="UniProtKB-UniPathway"/>
</dbReference>
<dbReference type="GO" id="GO:0019682">
    <property type="term" value="P:glyceraldehyde-3-phosphate metabolic process"/>
    <property type="evidence" value="ECO:0007669"/>
    <property type="project" value="UniProtKB-ARBA"/>
</dbReference>
<dbReference type="GO" id="GO:0016114">
    <property type="term" value="P:terpenoid biosynthetic process"/>
    <property type="evidence" value="ECO:0007669"/>
    <property type="project" value="UniProtKB-UniRule"/>
</dbReference>
<dbReference type="GO" id="GO:0009228">
    <property type="term" value="P:thiamine biosynthetic process"/>
    <property type="evidence" value="ECO:0007669"/>
    <property type="project" value="UniProtKB-UniRule"/>
</dbReference>
<dbReference type="CDD" id="cd02007">
    <property type="entry name" value="TPP_DXS"/>
    <property type="match status" value="1"/>
</dbReference>
<dbReference type="CDD" id="cd07033">
    <property type="entry name" value="TPP_PYR_DXS_TK_like"/>
    <property type="match status" value="1"/>
</dbReference>
<dbReference type="FunFam" id="3.40.50.920:FF:000002">
    <property type="entry name" value="1-deoxy-D-xylulose-5-phosphate synthase"/>
    <property type="match status" value="1"/>
</dbReference>
<dbReference type="FunFam" id="3.40.50.970:FF:000005">
    <property type="entry name" value="1-deoxy-D-xylulose-5-phosphate synthase"/>
    <property type="match status" value="1"/>
</dbReference>
<dbReference type="Gene3D" id="3.40.50.920">
    <property type="match status" value="1"/>
</dbReference>
<dbReference type="Gene3D" id="3.40.50.970">
    <property type="match status" value="2"/>
</dbReference>
<dbReference type="HAMAP" id="MF_00315">
    <property type="entry name" value="DXP_synth"/>
    <property type="match status" value="1"/>
</dbReference>
<dbReference type="InterPro" id="IPR005477">
    <property type="entry name" value="Dxylulose-5-P_synthase"/>
</dbReference>
<dbReference type="InterPro" id="IPR029061">
    <property type="entry name" value="THDP-binding"/>
</dbReference>
<dbReference type="InterPro" id="IPR009014">
    <property type="entry name" value="Transketo_C/PFOR_II"/>
</dbReference>
<dbReference type="InterPro" id="IPR005475">
    <property type="entry name" value="Transketolase-like_Pyr-bd"/>
</dbReference>
<dbReference type="InterPro" id="IPR020826">
    <property type="entry name" value="Transketolase_BS"/>
</dbReference>
<dbReference type="InterPro" id="IPR033248">
    <property type="entry name" value="Transketolase_C"/>
</dbReference>
<dbReference type="InterPro" id="IPR049557">
    <property type="entry name" value="Transketolase_CS"/>
</dbReference>
<dbReference type="NCBIfam" id="TIGR00204">
    <property type="entry name" value="dxs"/>
    <property type="match status" value="1"/>
</dbReference>
<dbReference type="NCBIfam" id="NF003933">
    <property type="entry name" value="PRK05444.2-2"/>
    <property type="match status" value="1"/>
</dbReference>
<dbReference type="PANTHER" id="PTHR43322">
    <property type="entry name" value="1-D-DEOXYXYLULOSE 5-PHOSPHATE SYNTHASE-RELATED"/>
    <property type="match status" value="1"/>
</dbReference>
<dbReference type="PANTHER" id="PTHR43322:SF5">
    <property type="entry name" value="1-DEOXY-D-XYLULOSE-5-PHOSPHATE SYNTHASE, CHLOROPLASTIC"/>
    <property type="match status" value="1"/>
</dbReference>
<dbReference type="Pfam" id="PF13292">
    <property type="entry name" value="DXP_synthase_N"/>
    <property type="match status" value="1"/>
</dbReference>
<dbReference type="Pfam" id="PF02779">
    <property type="entry name" value="Transket_pyr"/>
    <property type="match status" value="1"/>
</dbReference>
<dbReference type="Pfam" id="PF02780">
    <property type="entry name" value="Transketolase_C"/>
    <property type="match status" value="1"/>
</dbReference>
<dbReference type="SMART" id="SM00861">
    <property type="entry name" value="Transket_pyr"/>
    <property type="match status" value="1"/>
</dbReference>
<dbReference type="SUPFAM" id="SSF52518">
    <property type="entry name" value="Thiamin diphosphate-binding fold (THDP-binding)"/>
    <property type="match status" value="2"/>
</dbReference>
<dbReference type="SUPFAM" id="SSF52922">
    <property type="entry name" value="TK C-terminal domain-like"/>
    <property type="match status" value="1"/>
</dbReference>
<dbReference type="PROSITE" id="PS00801">
    <property type="entry name" value="TRANSKETOLASE_1"/>
    <property type="match status" value="1"/>
</dbReference>
<dbReference type="PROSITE" id="PS00802">
    <property type="entry name" value="TRANSKETOLASE_2"/>
    <property type="match status" value="1"/>
</dbReference>
<sequence>MTHPPKTPLLDQVTYPADLRKLEDRDLPQLAREVRDEMIDAVSRTGGHLGAGLGVVELTIAIHSVFDTPNDRLIFDVGHQCYPHKILTGRRDRIRTLRQENGLSGFTRRAESEYDPFGAAHSSTSISAGLGMAIAADLEKTDRRVIAVIGDGAMSAGMAYEALNNAGALDARLIVILNDNDMSIAPPTGAMSAYLARLASGRTYMGFRDFGKKLTAYLGKNIDRAITRAVEHARGYVTGGTMFEEMGFYHIGPIDGHSFDHLLPVLRNVRDNARGPVLIHVVTQKGKGYPPAEAAADKYHGVNKFDVITGAQARVKPNAPSYTSVFAEALVQEAALDDKIVGITAAMPNGTGLDKLAEAFPSRCFDVGIAEQHAVTFAAGLAAEGYKPFAALYSTFLQRAYDQVVHDVAIQGLPVRFPIDRAGFVGADGPTHAGSFDTAFLATLPGFVVMAAADEAELKHMVRTAAAYDAGPISFRYPRGEGVGVDMPARGEILQIGKGRIVKEGTKVALLSFGTRLADCLLASEDLEAAGLSTTVADARFAKPLDHELLRQLARHHEMLITVEEGSVGGFGSQVMQYLSSEGLLDNGLKIRSLVMPDIWMEQAKPEAMNAHAGLDRAGIVSTVFRALRRGVAVGVAG</sequence>
<evidence type="ECO:0000255" key="1">
    <source>
        <dbReference type="HAMAP-Rule" id="MF_00315"/>
    </source>
</evidence>
<gene>
    <name evidence="1" type="primary">dxs</name>
    <name type="ordered locus">RHE_CH00913</name>
</gene>